<evidence type="ECO:0000255" key="1">
    <source>
        <dbReference type="HAMAP-Rule" id="MF_01164"/>
    </source>
</evidence>
<protein>
    <recommendedName>
        <fullName evidence="1">Undecaprenyl-phosphate 4-deoxy-4-formamido-L-arabinose transferase</fullName>
        <ecNumber evidence="1">2.4.2.53</ecNumber>
    </recommendedName>
    <alternativeName>
        <fullName evidence="1">Undecaprenyl-phosphate Ara4FN transferase</fullName>
        <shortName evidence="1">Ara4FN transferase</shortName>
    </alternativeName>
</protein>
<dbReference type="EC" id="2.4.2.53" evidence="1"/>
<dbReference type="EMBL" id="CP001600">
    <property type="protein sequence ID" value="ACR68603.1"/>
    <property type="molecule type" value="Genomic_DNA"/>
</dbReference>
<dbReference type="RefSeq" id="WP_015870768.1">
    <property type="nucleotide sequence ID" value="NZ_CP169062.1"/>
</dbReference>
<dbReference type="SMR" id="C5BDQ5"/>
<dbReference type="STRING" id="67780.B6E78_00415"/>
<dbReference type="CAZy" id="GT2">
    <property type="family name" value="Glycosyltransferase Family 2"/>
</dbReference>
<dbReference type="GeneID" id="69538422"/>
<dbReference type="KEGG" id="eic:NT01EI_1414"/>
<dbReference type="PATRIC" id="fig|634503.3.peg.1274"/>
<dbReference type="HOGENOM" id="CLU_033536_0_0_6"/>
<dbReference type="OrthoDB" id="9811884at2"/>
<dbReference type="UniPathway" id="UPA00030"/>
<dbReference type="UniPathway" id="UPA00036">
    <property type="reaction ID" value="UER00495"/>
</dbReference>
<dbReference type="Proteomes" id="UP000001485">
    <property type="component" value="Chromosome"/>
</dbReference>
<dbReference type="GO" id="GO:0005886">
    <property type="term" value="C:plasma membrane"/>
    <property type="evidence" value="ECO:0007669"/>
    <property type="project" value="UniProtKB-SubCell"/>
</dbReference>
<dbReference type="GO" id="GO:0016780">
    <property type="term" value="F:phosphotransferase activity, for other substituted phosphate groups"/>
    <property type="evidence" value="ECO:0007669"/>
    <property type="project" value="UniProtKB-UniRule"/>
</dbReference>
<dbReference type="GO" id="GO:0099621">
    <property type="term" value="F:undecaprenyl-phosphate 4-deoxy-4-formamido-L-arabinose transferase activity"/>
    <property type="evidence" value="ECO:0007669"/>
    <property type="project" value="UniProtKB-EC"/>
</dbReference>
<dbReference type="GO" id="GO:0036108">
    <property type="term" value="P:4-amino-4-deoxy-alpha-L-arabinopyranosyl undecaprenyl phosphate biosynthetic process"/>
    <property type="evidence" value="ECO:0007669"/>
    <property type="project" value="UniProtKB-UniRule"/>
</dbReference>
<dbReference type="GO" id="GO:0009245">
    <property type="term" value="P:lipid A biosynthetic process"/>
    <property type="evidence" value="ECO:0007669"/>
    <property type="project" value="UniProtKB-UniRule"/>
</dbReference>
<dbReference type="GO" id="GO:0009103">
    <property type="term" value="P:lipopolysaccharide biosynthetic process"/>
    <property type="evidence" value="ECO:0007669"/>
    <property type="project" value="UniProtKB-UniRule"/>
</dbReference>
<dbReference type="GO" id="GO:0046677">
    <property type="term" value="P:response to antibiotic"/>
    <property type="evidence" value="ECO:0007669"/>
    <property type="project" value="UniProtKB-KW"/>
</dbReference>
<dbReference type="CDD" id="cd04187">
    <property type="entry name" value="DPM1_like_bac"/>
    <property type="match status" value="1"/>
</dbReference>
<dbReference type="FunFam" id="3.90.550.10:FF:000019">
    <property type="entry name" value="Undecaprenyl-phosphate 4-deoxy-4-formamido-L-arabinose transferase"/>
    <property type="match status" value="1"/>
</dbReference>
<dbReference type="Gene3D" id="3.90.550.10">
    <property type="entry name" value="Spore Coat Polysaccharide Biosynthesis Protein SpsA, Chain A"/>
    <property type="match status" value="1"/>
</dbReference>
<dbReference type="HAMAP" id="MF_01164">
    <property type="entry name" value="ArnC_transfer"/>
    <property type="match status" value="1"/>
</dbReference>
<dbReference type="InterPro" id="IPR022857">
    <property type="entry name" value="ArnC_tfrase"/>
</dbReference>
<dbReference type="InterPro" id="IPR001173">
    <property type="entry name" value="Glyco_trans_2-like"/>
</dbReference>
<dbReference type="InterPro" id="IPR050256">
    <property type="entry name" value="Glycosyltransferase_2"/>
</dbReference>
<dbReference type="InterPro" id="IPR029044">
    <property type="entry name" value="Nucleotide-diphossugar_trans"/>
</dbReference>
<dbReference type="NCBIfam" id="NF007986">
    <property type="entry name" value="PRK10714.1"/>
    <property type="match status" value="1"/>
</dbReference>
<dbReference type="PANTHER" id="PTHR48090:SF3">
    <property type="entry name" value="UNDECAPRENYL-PHOSPHATE 4-DEOXY-4-FORMAMIDO-L-ARABINOSE TRANSFERASE"/>
    <property type="match status" value="1"/>
</dbReference>
<dbReference type="PANTHER" id="PTHR48090">
    <property type="entry name" value="UNDECAPRENYL-PHOSPHATE 4-DEOXY-4-FORMAMIDO-L-ARABINOSE TRANSFERASE-RELATED"/>
    <property type="match status" value="1"/>
</dbReference>
<dbReference type="Pfam" id="PF00535">
    <property type="entry name" value="Glycos_transf_2"/>
    <property type="match status" value="1"/>
</dbReference>
<dbReference type="SUPFAM" id="SSF53448">
    <property type="entry name" value="Nucleotide-diphospho-sugar transferases"/>
    <property type="match status" value="1"/>
</dbReference>
<sequence>MSDFKTIQFVSVVIPVYNEQDSLSELLKRTIAACDSMGKQYEIVLVDDGSSDRSAEILREAAQRPGSRVVAVLLNRNYGQHSAIMAGFNHIKGDLVITLDADLQNPPEEIPRLVEAADQGYDVVGTIRQDRQDSWFRRRASRLINGLIQRTTGKSMSDYGCMLRAYRSSVIKAMLHCHERSTFIPILANSFARRTIEIPVKHAEREHGESKYGLMKLINLMYDLVTCLTTTPLRALSIFGSVVALLGFAFAVLLILMRLTLGPQWAAEGVFTLFAVLFIFIGAQFVGMGLLGEYIGRIYNDVRARPRYFIQNVVRANQPDEEQEK</sequence>
<keyword id="KW-0046">Antibiotic resistance</keyword>
<keyword id="KW-0997">Cell inner membrane</keyword>
<keyword id="KW-1003">Cell membrane</keyword>
<keyword id="KW-0328">Glycosyltransferase</keyword>
<keyword id="KW-0441">Lipid A biosynthesis</keyword>
<keyword id="KW-0444">Lipid biosynthesis</keyword>
<keyword id="KW-0443">Lipid metabolism</keyword>
<keyword id="KW-0448">Lipopolysaccharide biosynthesis</keyword>
<keyword id="KW-0472">Membrane</keyword>
<keyword id="KW-0808">Transferase</keyword>
<keyword id="KW-0812">Transmembrane</keyword>
<keyword id="KW-1133">Transmembrane helix</keyword>
<feature type="chain" id="PRO_1000213725" description="Undecaprenyl-phosphate 4-deoxy-4-formamido-L-arabinose transferase">
    <location>
        <begin position="1"/>
        <end position="325"/>
    </location>
</feature>
<feature type="transmembrane region" description="Helical" evidence="1">
    <location>
        <begin position="236"/>
        <end position="256"/>
    </location>
</feature>
<feature type="transmembrane region" description="Helical" evidence="1">
    <location>
        <begin position="270"/>
        <end position="290"/>
    </location>
</feature>
<gene>
    <name evidence="1" type="primary">arnC</name>
    <name type="ordered locus">NT01EI_1414</name>
</gene>
<proteinExistence type="inferred from homology"/>
<name>ARNC_EDWI9</name>
<comment type="function">
    <text evidence="1">Catalyzes the transfer of 4-deoxy-4-formamido-L-arabinose from UDP to undecaprenyl phosphate. The modified arabinose is attached to lipid A and is required for resistance to polymyxin and cationic antimicrobial peptides.</text>
</comment>
<comment type="catalytic activity">
    <reaction evidence="1">
        <text>UDP-4-deoxy-4-formamido-beta-L-arabinose + di-trans,octa-cis-undecaprenyl phosphate = 4-deoxy-4-formamido-alpha-L-arabinopyranosyl di-trans,octa-cis-undecaprenyl phosphate + UDP</text>
        <dbReference type="Rhea" id="RHEA:27722"/>
        <dbReference type="ChEBI" id="CHEBI:58223"/>
        <dbReference type="ChEBI" id="CHEBI:58709"/>
        <dbReference type="ChEBI" id="CHEBI:58909"/>
        <dbReference type="ChEBI" id="CHEBI:60392"/>
        <dbReference type="EC" id="2.4.2.53"/>
    </reaction>
</comment>
<comment type="pathway">
    <text evidence="1">Glycolipid biosynthesis; 4-amino-4-deoxy-alpha-L-arabinose undecaprenyl phosphate biosynthesis; 4-amino-4-deoxy-alpha-L-arabinose undecaprenyl phosphate from UDP-4-deoxy-4-formamido-beta-L-arabinose and undecaprenyl phosphate: step 1/2.</text>
</comment>
<comment type="pathway">
    <text evidence="1">Bacterial outer membrane biogenesis; lipopolysaccharide biosynthesis.</text>
</comment>
<comment type="subcellular location">
    <subcellularLocation>
        <location evidence="1">Cell inner membrane</location>
        <topology evidence="1">Multi-pass membrane protein</topology>
    </subcellularLocation>
</comment>
<comment type="similarity">
    <text evidence="1">Belongs to the glycosyltransferase 2 family.</text>
</comment>
<accession>C5BDQ5</accession>
<organism>
    <name type="scientific">Edwardsiella ictaluri (strain 93-146)</name>
    <dbReference type="NCBI Taxonomy" id="634503"/>
    <lineage>
        <taxon>Bacteria</taxon>
        <taxon>Pseudomonadati</taxon>
        <taxon>Pseudomonadota</taxon>
        <taxon>Gammaproteobacteria</taxon>
        <taxon>Enterobacterales</taxon>
        <taxon>Hafniaceae</taxon>
        <taxon>Edwardsiella</taxon>
    </lineage>
</organism>
<reference key="1">
    <citation type="submission" date="2009-03" db="EMBL/GenBank/DDBJ databases">
        <title>Complete genome sequence of Edwardsiella ictaluri 93-146.</title>
        <authorList>
            <person name="Williams M.L."/>
            <person name="Gillaspy A.F."/>
            <person name="Dyer D.W."/>
            <person name="Thune R.L."/>
            <person name="Waldbieser G.C."/>
            <person name="Schuster S.C."/>
            <person name="Gipson J."/>
            <person name="Zaitshik J."/>
            <person name="Landry C."/>
            <person name="Lawrence M.L."/>
        </authorList>
    </citation>
    <scope>NUCLEOTIDE SEQUENCE [LARGE SCALE GENOMIC DNA]</scope>
    <source>
        <strain>93-146</strain>
    </source>
</reference>